<reference key="1">
    <citation type="journal article" date="2004" name="Microbiology">
        <title>Urease activity of enterohaemorrhagic Escherichia coli depends on a specific one-base substitution in ureD.</title>
        <authorList>
            <person name="Nakano M."/>
            <person name="Iida T."/>
            <person name="Honda T."/>
        </authorList>
    </citation>
    <scope>NUCLEOTIDE SEQUENCE [GENOMIC DNA]</scope>
    <scope>TRANSCRIPTION</scope>
    <scope>PREMATURE STOP CODON</scope>
    <source>
        <strain>O157:H7 / Sakai / RIMD 0509952 / EHEC</strain>
    </source>
</reference>
<reference key="2">
    <citation type="journal article" date="2001" name="Nature">
        <title>Genome sequence of enterohaemorrhagic Escherichia coli O157:H7.</title>
        <authorList>
            <person name="Perna N.T."/>
            <person name="Plunkett G. III"/>
            <person name="Burland V."/>
            <person name="Mau B."/>
            <person name="Glasner J.D."/>
            <person name="Rose D.J."/>
            <person name="Mayhew G.F."/>
            <person name="Evans P.S."/>
            <person name="Gregor J."/>
            <person name="Kirkpatrick H.A."/>
            <person name="Posfai G."/>
            <person name="Hackett J."/>
            <person name="Klink S."/>
            <person name="Boutin A."/>
            <person name="Shao Y."/>
            <person name="Miller L."/>
            <person name="Grotbeck E.J."/>
            <person name="Davis N.W."/>
            <person name="Lim A."/>
            <person name="Dimalanta E.T."/>
            <person name="Potamousis K."/>
            <person name="Apodaca J."/>
            <person name="Anantharaman T.S."/>
            <person name="Lin J."/>
            <person name="Yen G."/>
            <person name="Schwartz D.C."/>
            <person name="Welch R.A."/>
            <person name="Blattner F.R."/>
        </authorList>
    </citation>
    <scope>NUCLEOTIDE SEQUENCE [LARGE SCALE GENOMIC DNA]</scope>
    <source>
        <strain>O157:H7 / EDL933 / ATCC 700927 / EHEC</strain>
    </source>
</reference>
<reference key="3">
    <citation type="journal article" date="2001" name="DNA Res.">
        <title>Complete genome sequence of enterohemorrhagic Escherichia coli O157:H7 and genomic comparison with a laboratory strain K-12.</title>
        <authorList>
            <person name="Hayashi T."/>
            <person name="Makino K."/>
            <person name="Ohnishi M."/>
            <person name="Kurokawa K."/>
            <person name="Ishii K."/>
            <person name="Yokoyama K."/>
            <person name="Han C.-G."/>
            <person name="Ohtsubo E."/>
            <person name="Nakayama K."/>
            <person name="Murata T."/>
            <person name="Tanaka M."/>
            <person name="Tobe T."/>
            <person name="Iida T."/>
            <person name="Takami H."/>
            <person name="Honda T."/>
            <person name="Sasakawa C."/>
            <person name="Ogasawara N."/>
            <person name="Yasunaga T."/>
            <person name="Kuhara S."/>
            <person name="Shiba T."/>
            <person name="Hattori M."/>
            <person name="Shinagawa H."/>
        </authorList>
    </citation>
    <scope>NUCLEOTIDE SEQUENCE [LARGE SCALE GENOMIC DNA]</scope>
    <source>
        <strain>O157:H7 / Sakai / RIMD 0509952 / EHEC</strain>
    </source>
</reference>
<comment type="function">
    <text evidence="1">Required for maturation of urease via the functional incorporation of the urease nickel metallocenter.</text>
</comment>
<comment type="subunit">
    <text evidence="1">UreD, UreF and UreG form a complex that acts as a GTP-hydrolysis-dependent molecular chaperone, activating the urease apoprotein by helping to assemble the nickel containing metallocenter of UreC. The UreE protein probably delivers the nickel.</text>
</comment>
<comment type="subcellular location">
    <subcellularLocation>
        <location evidence="1">Cytoplasm</location>
    </subcellularLocation>
</comment>
<comment type="similarity">
    <text evidence="1">Belongs to the UreD family.</text>
</comment>
<comment type="caution">
    <text evidence="2">Could be the product of a pseudogene. Neither O157 strain expresses urease. In both O157 strains this CDS is shorter than in urease producing E.coli strains, due to a premature stop codon. Urease activity can be restored in O157 / Sakai upon complementation with a wild-type ureD.</text>
</comment>
<comment type="caution">
    <text evidence="2">This region of the chromosome is duplicated in strain O157:H7 / EDL933 but not in O157:H7 / Sakai.</text>
</comment>
<comment type="sequence caution" evidence="2">
    <conflict type="erroneous initiation">
        <sequence resource="EMBL-CDS" id="AAG55287"/>
    </conflict>
    <text>Truncated N-terminus.</text>
</comment>
<comment type="sequence caution" evidence="2">
    <conflict type="erroneous initiation">
        <sequence resource="EMBL-CDS" id="AAG55696"/>
    </conflict>
    <text>Truncated N-terminus.</text>
</comment>
<comment type="sequence caution" evidence="2">
    <conflict type="erroneous initiation">
        <sequence resource="EMBL-CDS" id="BAB34744"/>
    </conflict>
    <text>Truncated N-terminus.</text>
</comment>
<proteinExistence type="uncertain"/>
<evidence type="ECO:0000255" key="1">
    <source>
        <dbReference type="HAMAP-Rule" id="MF_01384"/>
    </source>
</evidence>
<evidence type="ECO:0000305" key="2"/>
<organism>
    <name type="scientific">Escherichia coli O157:H7</name>
    <dbReference type="NCBI Taxonomy" id="83334"/>
    <lineage>
        <taxon>Bacteria</taxon>
        <taxon>Pseudomonadati</taxon>
        <taxon>Pseudomonadota</taxon>
        <taxon>Gammaproteobacteria</taxon>
        <taxon>Enterobacterales</taxon>
        <taxon>Enterobacteriaceae</taxon>
        <taxon>Escherichia</taxon>
    </lineage>
</organism>
<keyword id="KW-0143">Chaperone</keyword>
<keyword id="KW-0963">Cytoplasm</keyword>
<keyword id="KW-0996">Nickel insertion</keyword>
<keyword id="KW-1185">Reference proteome</keyword>
<dbReference type="EMBL" id="AE005174">
    <property type="protein sequence ID" value="AAG55287.1"/>
    <property type="status" value="ALT_INIT"/>
    <property type="molecule type" value="Genomic_DNA"/>
</dbReference>
<dbReference type="EMBL" id="AE005174">
    <property type="protein sequence ID" value="AAG55696.1"/>
    <property type="status" value="ALT_INIT"/>
    <property type="molecule type" value="Genomic_DNA"/>
</dbReference>
<dbReference type="EMBL" id="BA000007">
    <property type="protein sequence ID" value="BAB34744.2"/>
    <property type="status" value="ALT_INIT"/>
    <property type="molecule type" value="Genomic_DNA"/>
</dbReference>
<dbReference type="PIR" id="A99794">
    <property type="entry name" value="A99794"/>
</dbReference>
<dbReference type="PIR" id="D85654">
    <property type="entry name" value="D85654"/>
</dbReference>
<dbReference type="RefSeq" id="NP_309348.1">
    <property type="nucleotide sequence ID" value="NC_002695.1"/>
</dbReference>
<dbReference type="SMR" id="Q8XAG3"/>
<dbReference type="STRING" id="155864.Z1142"/>
<dbReference type="KEGG" id="ece:Z1142"/>
<dbReference type="KEGG" id="ece:Z1581"/>
<dbReference type="KEGG" id="ecs:ECs_1321"/>
<dbReference type="PATRIC" id="fig|386585.9.peg.1426"/>
<dbReference type="eggNOG" id="COG0829">
    <property type="taxonomic scope" value="Bacteria"/>
</dbReference>
<dbReference type="HOGENOM" id="CLU_056339_0_0_6"/>
<dbReference type="Proteomes" id="UP000000558">
    <property type="component" value="Chromosome"/>
</dbReference>
<dbReference type="Proteomes" id="UP000002519">
    <property type="component" value="Chromosome"/>
</dbReference>
<dbReference type="GO" id="GO:0005737">
    <property type="term" value="C:cytoplasm"/>
    <property type="evidence" value="ECO:0007669"/>
    <property type="project" value="UniProtKB-SubCell"/>
</dbReference>
<dbReference type="GO" id="GO:0016151">
    <property type="term" value="F:nickel cation binding"/>
    <property type="evidence" value="ECO:0007669"/>
    <property type="project" value="UniProtKB-UniRule"/>
</dbReference>
<dbReference type="HAMAP" id="MF_01384">
    <property type="entry name" value="UreD"/>
    <property type="match status" value="1"/>
</dbReference>
<dbReference type="InterPro" id="IPR002669">
    <property type="entry name" value="UreD"/>
</dbReference>
<dbReference type="PANTHER" id="PTHR33643">
    <property type="entry name" value="UREASE ACCESSORY PROTEIN D"/>
    <property type="match status" value="1"/>
</dbReference>
<dbReference type="PANTHER" id="PTHR33643:SF1">
    <property type="entry name" value="UREASE ACCESSORY PROTEIN D"/>
    <property type="match status" value="1"/>
</dbReference>
<dbReference type="Pfam" id="PF01774">
    <property type="entry name" value="UreD"/>
    <property type="match status" value="1"/>
</dbReference>
<feature type="chain" id="PRO_0000340453" description="Putative urease accessory protein UreD homolog">
    <location>
        <begin position="1"/>
        <end position="247"/>
    </location>
</feature>
<gene>
    <name evidence="1" type="primary">ureD1</name>
    <name type="ordered locus">Z1142</name>
    <name type="ordered locus">ECs1321</name>
</gene>
<gene>
    <name evidence="1" type="primary">ureD2</name>
    <name type="ordered locus">Z1581</name>
</gene>
<accession>Q8XAG3</accession>
<accession>Q7AFH7</accession>
<protein>
    <recommendedName>
        <fullName>Putative urease accessory protein UreD homolog</fullName>
    </recommendedName>
</protein>
<sequence length="247" mass="27478">MLSTALPQNKKGWQAMLDLRFQRLHGKTTLTTRHHVGLLTVQRPFYPEEETCHLCLLHPPGGIVGGDELIINAIIDSDCHTLITMPGASKFYRSSGAQAHLQQNLTLCNNATLEWLPQDSIFFPGAHATLHTVFHLSSSSTLLAWDLLCLGRPVIGETFSHGTLANRLEIWVDGSPLLIERLHVANGELTCVARKPWVGTMLFYLGNETQLEDIREKLTPLENYAGATLTDGLLTVRFLSDDNLRCQ</sequence>
<name>URED_ECO57</name>